<dbReference type="EC" id="4.2.3.5" evidence="1"/>
<dbReference type="EMBL" id="BX248583">
    <property type="protein sequence ID" value="CAD83189.1"/>
    <property type="molecule type" value="Genomic_DNA"/>
</dbReference>
<dbReference type="SMR" id="Q7VRU6"/>
<dbReference type="STRING" id="203907.Bfl500"/>
<dbReference type="KEGG" id="bfl:Bfl500"/>
<dbReference type="eggNOG" id="COG0082">
    <property type="taxonomic scope" value="Bacteria"/>
</dbReference>
<dbReference type="HOGENOM" id="CLU_034547_0_2_6"/>
<dbReference type="OrthoDB" id="9771806at2"/>
<dbReference type="UniPathway" id="UPA00053">
    <property type="reaction ID" value="UER00090"/>
</dbReference>
<dbReference type="Proteomes" id="UP000002192">
    <property type="component" value="Chromosome"/>
</dbReference>
<dbReference type="GO" id="GO:0005829">
    <property type="term" value="C:cytosol"/>
    <property type="evidence" value="ECO:0007669"/>
    <property type="project" value="TreeGrafter"/>
</dbReference>
<dbReference type="GO" id="GO:0004107">
    <property type="term" value="F:chorismate synthase activity"/>
    <property type="evidence" value="ECO:0007669"/>
    <property type="project" value="UniProtKB-UniRule"/>
</dbReference>
<dbReference type="GO" id="GO:0010181">
    <property type="term" value="F:FMN binding"/>
    <property type="evidence" value="ECO:0007669"/>
    <property type="project" value="TreeGrafter"/>
</dbReference>
<dbReference type="GO" id="GO:0008652">
    <property type="term" value="P:amino acid biosynthetic process"/>
    <property type="evidence" value="ECO:0007669"/>
    <property type="project" value="UniProtKB-KW"/>
</dbReference>
<dbReference type="GO" id="GO:0009073">
    <property type="term" value="P:aromatic amino acid family biosynthetic process"/>
    <property type="evidence" value="ECO:0007669"/>
    <property type="project" value="UniProtKB-KW"/>
</dbReference>
<dbReference type="GO" id="GO:0009423">
    <property type="term" value="P:chorismate biosynthetic process"/>
    <property type="evidence" value="ECO:0007669"/>
    <property type="project" value="UniProtKB-UniRule"/>
</dbReference>
<dbReference type="CDD" id="cd07304">
    <property type="entry name" value="Chorismate_synthase"/>
    <property type="match status" value="1"/>
</dbReference>
<dbReference type="Gene3D" id="3.60.150.10">
    <property type="entry name" value="Chorismate synthase AroC"/>
    <property type="match status" value="1"/>
</dbReference>
<dbReference type="HAMAP" id="MF_00300">
    <property type="entry name" value="Chorismate_synth"/>
    <property type="match status" value="1"/>
</dbReference>
<dbReference type="InterPro" id="IPR000453">
    <property type="entry name" value="Chorismate_synth"/>
</dbReference>
<dbReference type="InterPro" id="IPR035904">
    <property type="entry name" value="Chorismate_synth_AroC_sf"/>
</dbReference>
<dbReference type="InterPro" id="IPR020541">
    <property type="entry name" value="Chorismate_synthase_CS"/>
</dbReference>
<dbReference type="NCBIfam" id="TIGR00033">
    <property type="entry name" value="aroC"/>
    <property type="match status" value="1"/>
</dbReference>
<dbReference type="NCBIfam" id="NF003793">
    <property type="entry name" value="PRK05382.1"/>
    <property type="match status" value="1"/>
</dbReference>
<dbReference type="PANTHER" id="PTHR21085">
    <property type="entry name" value="CHORISMATE SYNTHASE"/>
    <property type="match status" value="1"/>
</dbReference>
<dbReference type="PANTHER" id="PTHR21085:SF0">
    <property type="entry name" value="CHORISMATE SYNTHASE"/>
    <property type="match status" value="1"/>
</dbReference>
<dbReference type="Pfam" id="PF01264">
    <property type="entry name" value="Chorismate_synt"/>
    <property type="match status" value="1"/>
</dbReference>
<dbReference type="PIRSF" id="PIRSF001456">
    <property type="entry name" value="Chorismate_synth"/>
    <property type="match status" value="1"/>
</dbReference>
<dbReference type="SUPFAM" id="SSF103263">
    <property type="entry name" value="Chorismate synthase, AroC"/>
    <property type="match status" value="1"/>
</dbReference>
<dbReference type="PROSITE" id="PS00787">
    <property type="entry name" value="CHORISMATE_SYNTHASE_1"/>
    <property type="match status" value="1"/>
</dbReference>
<dbReference type="PROSITE" id="PS00788">
    <property type="entry name" value="CHORISMATE_SYNTHASE_2"/>
    <property type="match status" value="1"/>
</dbReference>
<dbReference type="PROSITE" id="PS00789">
    <property type="entry name" value="CHORISMATE_SYNTHASE_3"/>
    <property type="match status" value="1"/>
</dbReference>
<accession>Q7VRU6</accession>
<name>AROC_BLOFL</name>
<organism>
    <name type="scientific">Blochmanniella floridana</name>
    <dbReference type="NCBI Taxonomy" id="203907"/>
    <lineage>
        <taxon>Bacteria</taxon>
        <taxon>Pseudomonadati</taxon>
        <taxon>Pseudomonadota</taxon>
        <taxon>Gammaproteobacteria</taxon>
        <taxon>Enterobacterales</taxon>
        <taxon>Enterobacteriaceae</taxon>
        <taxon>ant endosymbionts</taxon>
        <taxon>Candidatus Blochmanniella</taxon>
    </lineage>
</organism>
<evidence type="ECO:0000255" key="1">
    <source>
        <dbReference type="HAMAP-Rule" id="MF_00300"/>
    </source>
</evidence>
<reference key="1">
    <citation type="journal article" date="2003" name="Proc. Natl. Acad. Sci. U.S.A.">
        <title>The genome sequence of Blochmannia floridanus: comparative analysis of reduced genomes.</title>
        <authorList>
            <person name="Gil R."/>
            <person name="Silva F.J."/>
            <person name="Zientz E."/>
            <person name="Delmotte F."/>
            <person name="Gonzalez-Candelas F."/>
            <person name="Latorre A."/>
            <person name="Rausell C."/>
            <person name="Kamerbeek J."/>
            <person name="Gadau J."/>
            <person name="Hoelldobler B."/>
            <person name="van Ham R.C.H.J."/>
            <person name="Gross R."/>
            <person name="Moya A."/>
        </authorList>
    </citation>
    <scope>NUCLEOTIDE SEQUENCE [LARGE SCALE GENOMIC DNA]</scope>
</reference>
<proteinExistence type="inferred from homology"/>
<feature type="chain" id="PRO_0000140570" description="Chorismate synthase">
    <location>
        <begin position="1"/>
        <end position="357"/>
    </location>
</feature>
<feature type="binding site" evidence="1">
    <location>
        <position position="48"/>
    </location>
    <ligand>
        <name>NADP(+)</name>
        <dbReference type="ChEBI" id="CHEBI:58349"/>
    </ligand>
</feature>
<feature type="binding site" evidence="1">
    <location>
        <position position="54"/>
    </location>
    <ligand>
        <name>NADP(+)</name>
        <dbReference type="ChEBI" id="CHEBI:58349"/>
    </ligand>
</feature>
<feature type="binding site" evidence="1">
    <location>
        <begin position="125"/>
        <end position="127"/>
    </location>
    <ligand>
        <name>FMN</name>
        <dbReference type="ChEBI" id="CHEBI:58210"/>
    </ligand>
</feature>
<feature type="binding site" evidence="1">
    <location>
        <begin position="238"/>
        <end position="239"/>
    </location>
    <ligand>
        <name>FMN</name>
        <dbReference type="ChEBI" id="CHEBI:58210"/>
    </ligand>
</feature>
<feature type="binding site" evidence="1">
    <location>
        <position position="278"/>
    </location>
    <ligand>
        <name>FMN</name>
        <dbReference type="ChEBI" id="CHEBI:58210"/>
    </ligand>
</feature>
<feature type="binding site" evidence="1">
    <location>
        <begin position="293"/>
        <end position="297"/>
    </location>
    <ligand>
        <name>FMN</name>
        <dbReference type="ChEBI" id="CHEBI:58210"/>
    </ligand>
</feature>
<feature type="binding site" evidence="1">
    <location>
        <position position="319"/>
    </location>
    <ligand>
        <name>FMN</name>
        <dbReference type="ChEBI" id="CHEBI:58210"/>
    </ligand>
</feature>
<gene>
    <name evidence="1" type="primary">aroC</name>
    <name type="ordered locus">Bfl500</name>
</gene>
<keyword id="KW-0028">Amino-acid biosynthesis</keyword>
<keyword id="KW-0057">Aromatic amino acid biosynthesis</keyword>
<keyword id="KW-0274">FAD</keyword>
<keyword id="KW-0285">Flavoprotein</keyword>
<keyword id="KW-0288">FMN</keyword>
<keyword id="KW-0456">Lyase</keyword>
<keyword id="KW-0521">NADP</keyword>
<keyword id="KW-1185">Reference proteome</keyword>
<comment type="function">
    <text evidence="1">Catalyzes the anti-1,4-elimination of the C-3 phosphate and the C-6 proR hydrogen from 5-enolpyruvylshikimate-3-phosphate (EPSP) to yield chorismate, which is the branch point compound that serves as the starting substrate for the three terminal pathways of aromatic amino acid biosynthesis. This reaction introduces a second double bond into the aromatic ring system.</text>
</comment>
<comment type="catalytic activity">
    <reaction evidence="1">
        <text>5-O-(1-carboxyvinyl)-3-phosphoshikimate = chorismate + phosphate</text>
        <dbReference type="Rhea" id="RHEA:21020"/>
        <dbReference type="ChEBI" id="CHEBI:29748"/>
        <dbReference type="ChEBI" id="CHEBI:43474"/>
        <dbReference type="ChEBI" id="CHEBI:57701"/>
        <dbReference type="EC" id="4.2.3.5"/>
    </reaction>
</comment>
<comment type="cofactor">
    <cofactor evidence="1">
        <name>FMNH2</name>
        <dbReference type="ChEBI" id="CHEBI:57618"/>
    </cofactor>
    <text evidence="1">Reduced FMN (FMNH(2)).</text>
</comment>
<comment type="pathway">
    <text evidence="1">Metabolic intermediate biosynthesis; chorismate biosynthesis; chorismate from D-erythrose 4-phosphate and phosphoenolpyruvate: step 7/7.</text>
</comment>
<comment type="subunit">
    <text evidence="1">Homotetramer.</text>
</comment>
<comment type="similarity">
    <text evidence="1">Belongs to the chorismate synthase family.</text>
</comment>
<protein>
    <recommendedName>
        <fullName evidence="1">Chorismate synthase</fullName>
        <shortName evidence="1">CS</shortName>
        <ecNumber evidence="1">4.2.3.5</ecNumber>
    </recommendedName>
    <alternativeName>
        <fullName evidence="1">5-enolpyruvylshikimate-3-phosphate phospholyase</fullName>
    </alternativeName>
</protein>
<sequence>MAGNSIGQYFKVTTFGESHGPAIGGIIDGVPPGLSLNAQDIQFDLNRRRPGTSRYTSPRSEPDIVEILSGVFNEKTTGTSIGLIIKNIDQRSQDYEEIKNLYRPGHADYTYEKKYGLRDYRGGGRSSARETAIRVAAGAIAKKYLYKINKINIRAYLKQIGHIHCDFKDWIYVNNNPFFCPNPEQITELDLFIRNLKKLGNSVGAKVTIIAENLPIGLGEPVFDRLDADLAHALMSINAVKGIEIGDGFSAITKLGSEYRDEITSQGFQSNHSGGILGGISTGQPIIMHIAIKPTSSIKIPGKTVTNHNQETQIITTGRHDPCIGIRIIPIAEAMVAIILMDHILRFRAQCGDRKII</sequence>